<keyword id="KW-0030">Aminoacyl-tRNA synthetase</keyword>
<keyword id="KW-0067">ATP-binding</keyword>
<keyword id="KW-0963">Cytoplasm</keyword>
<keyword id="KW-0436">Ligase</keyword>
<keyword id="KW-0479">Metal-binding</keyword>
<keyword id="KW-0547">Nucleotide-binding</keyword>
<keyword id="KW-0648">Protein biosynthesis</keyword>
<keyword id="KW-1185">Reference proteome</keyword>
<keyword id="KW-0862">Zinc</keyword>
<proteinExistence type="inferred from homology"/>
<sequence>MQNRKKILTTCAFPYANGSLHIGHILEHIQADIWVRFNRMIGNEIYFICADDSHGTPIMIKAKKNKISPEKMVFLFYKEHKNDLSKFNISYDNYYLTHSKENYRFCKLIYKLLKRKKLIFSKYISQFYDCKINMFLSDRLIQGKCPECNSEKQYSDNCNICGANYCSTDVINPISILSKSVPIIKKSKHLFFDLPKFEKFLKKWIHSGVLKKENLRKVSEWFKNGLKPWDISRDAPYFGFKIPNEKEKYFYVWLDAPIGYLSTFKNLCDKKEKIFFSEFWDVNSKSEIYQFIGKDVIYFHSLFWPAILHGINLKKPTKLFVHGHVTLNGEKMSKSNGFVIKAKTYLKYCDSDFLRYYFSMKISSCAKDIDFSLSDFMNKVNSNIINKIVNLASRSSSFIDKYFEGYLSYKIENYELYCKFTSLKEKINKYFQSNNISFIIYEIIKLAELANQYFNKKSPWKLTEESKDKRNKLHEISSMGINMFYIIMIYLKPILPNLSKKTEDFLNISLKWENINKPLLYPHLINKFKPLCNRITKSQINYIKRESTIK</sequence>
<evidence type="ECO:0000255" key="1">
    <source>
        <dbReference type="HAMAP-Rule" id="MF_00098"/>
    </source>
</evidence>
<organism>
    <name type="scientific">Wigglesworthia glossinidia brevipalpis</name>
    <dbReference type="NCBI Taxonomy" id="36870"/>
    <lineage>
        <taxon>Bacteria</taxon>
        <taxon>Pseudomonadati</taxon>
        <taxon>Pseudomonadota</taxon>
        <taxon>Gammaproteobacteria</taxon>
        <taxon>Enterobacterales</taxon>
        <taxon>Erwiniaceae</taxon>
        <taxon>Wigglesworthia</taxon>
    </lineage>
</organism>
<gene>
    <name evidence="1" type="primary">metG</name>
    <name type="ordered locus">WIGBR5360</name>
</gene>
<feature type="chain" id="PRO_0000139174" description="Methionine--tRNA ligase">
    <location>
        <begin position="1"/>
        <end position="550"/>
    </location>
</feature>
<feature type="short sequence motif" description="'HIGH' region">
    <location>
        <begin position="14"/>
        <end position="24"/>
    </location>
</feature>
<feature type="short sequence motif" description="'KMSKS' region">
    <location>
        <begin position="331"/>
        <end position="335"/>
    </location>
</feature>
<feature type="binding site" evidence="1">
    <location>
        <position position="145"/>
    </location>
    <ligand>
        <name>Zn(2+)</name>
        <dbReference type="ChEBI" id="CHEBI:29105"/>
    </ligand>
</feature>
<feature type="binding site" evidence="1">
    <location>
        <position position="148"/>
    </location>
    <ligand>
        <name>Zn(2+)</name>
        <dbReference type="ChEBI" id="CHEBI:29105"/>
    </ligand>
</feature>
<feature type="binding site" evidence="1">
    <location>
        <position position="158"/>
    </location>
    <ligand>
        <name>Zn(2+)</name>
        <dbReference type="ChEBI" id="CHEBI:29105"/>
    </ligand>
</feature>
<feature type="binding site" evidence="1">
    <location>
        <position position="161"/>
    </location>
    <ligand>
        <name>Zn(2+)</name>
        <dbReference type="ChEBI" id="CHEBI:29105"/>
    </ligand>
</feature>
<feature type="binding site" evidence="1">
    <location>
        <position position="334"/>
    </location>
    <ligand>
        <name>ATP</name>
        <dbReference type="ChEBI" id="CHEBI:30616"/>
    </ligand>
</feature>
<accession>Q8D219</accession>
<protein>
    <recommendedName>
        <fullName evidence="1">Methionine--tRNA ligase</fullName>
        <ecNumber evidence="1">6.1.1.10</ecNumber>
    </recommendedName>
    <alternativeName>
        <fullName evidence="1">Methionyl-tRNA synthetase</fullName>
        <shortName evidence="1">MetRS</shortName>
    </alternativeName>
</protein>
<comment type="function">
    <text evidence="1">Is required not only for elongation of protein synthesis but also for the initiation of all mRNA translation through initiator tRNA(fMet) aminoacylation.</text>
</comment>
<comment type="catalytic activity">
    <reaction evidence="1">
        <text>tRNA(Met) + L-methionine + ATP = L-methionyl-tRNA(Met) + AMP + diphosphate</text>
        <dbReference type="Rhea" id="RHEA:13481"/>
        <dbReference type="Rhea" id="RHEA-COMP:9667"/>
        <dbReference type="Rhea" id="RHEA-COMP:9698"/>
        <dbReference type="ChEBI" id="CHEBI:30616"/>
        <dbReference type="ChEBI" id="CHEBI:33019"/>
        <dbReference type="ChEBI" id="CHEBI:57844"/>
        <dbReference type="ChEBI" id="CHEBI:78442"/>
        <dbReference type="ChEBI" id="CHEBI:78530"/>
        <dbReference type="ChEBI" id="CHEBI:456215"/>
        <dbReference type="EC" id="6.1.1.10"/>
    </reaction>
</comment>
<comment type="cofactor">
    <cofactor evidence="1">
        <name>Zn(2+)</name>
        <dbReference type="ChEBI" id="CHEBI:29105"/>
    </cofactor>
    <text evidence="1">Binds 1 zinc ion per subunit.</text>
</comment>
<comment type="subunit">
    <text evidence="1">Monomer.</text>
</comment>
<comment type="subcellular location">
    <subcellularLocation>
        <location evidence="1">Cytoplasm</location>
    </subcellularLocation>
</comment>
<comment type="similarity">
    <text evidence="1">Belongs to the class-I aminoacyl-tRNA synthetase family. MetG type 1 subfamily.</text>
</comment>
<dbReference type="EC" id="6.1.1.10" evidence="1"/>
<dbReference type="EMBL" id="BA000021">
    <property type="protein sequence ID" value="BAC24682.1"/>
    <property type="molecule type" value="Genomic_DNA"/>
</dbReference>
<dbReference type="SMR" id="Q8D219"/>
<dbReference type="STRING" id="36870.gene:10369045"/>
<dbReference type="KEGG" id="wbr:metG"/>
<dbReference type="eggNOG" id="COG0143">
    <property type="taxonomic scope" value="Bacteria"/>
</dbReference>
<dbReference type="HOGENOM" id="CLU_009710_7_0_6"/>
<dbReference type="OrthoDB" id="9810191at2"/>
<dbReference type="Proteomes" id="UP000000562">
    <property type="component" value="Chromosome"/>
</dbReference>
<dbReference type="GO" id="GO:0005829">
    <property type="term" value="C:cytosol"/>
    <property type="evidence" value="ECO:0007669"/>
    <property type="project" value="TreeGrafter"/>
</dbReference>
<dbReference type="GO" id="GO:0005524">
    <property type="term" value="F:ATP binding"/>
    <property type="evidence" value="ECO:0007669"/>
    <property type="project" value="UniProtKB-UniRule"/>
</dbReference>
<dbReference type="GO" id="GO:0046872">
    <property type="term" value="F:metal ion binding"/>
    <property type="evidence" value="ECO:0007669"/>
    <property type="project" value="UniProtKB-KW"/>
</dbReference>
<dbReference type="GO" id="GO:0004825">
    <property type="term" value="F:methionine-tRNA ligase activity"/>
    <property type="evidence" value="ECO:0007669"/>
    <property type="project" value="UniProtKB-UniRule"/>
</dbReference>
<dbReference type="GO" id="GO:0006431">
    <property type="term" value="P:methionyl-tRNA aminoacylation"/>
    <property type="evidence" value="ECO:0007669"/>
    <property type="project" value="UniProtKB-UniRule"/>
</dbReference>
<dbReference type="CDD" id="cd07957">
    <property type="entry name" value="Anticodon_Ia_Met"/>
    <property type="match status" value="1"/>
</dbReference>
<dbReference type="Gene3D" id="3.40.50.620">
    <property type="entry name" value="HUPs"/>
    <property type="match status" value="1"/>
</dbReference>
<dbReference type="Gene3D" id="1.10.730.10">
    <property type="entry name" value="Isoleucyl-tRNA Synthetase, Domain 1"/>
    <property type="match status" value="1"/>
</dbReference>
<dbReference type="Gene3D" id="2.20.28.20">
    <property type="entry name" value="Methionyl-tRNA synthetase, Zn-domain"/>
    <property type="match status" value="1"/>
</dbReference>
<dbReference type="HAMAP" id="MF_00098">
    <property type="entry name" value="Met_tRNA_synth_type1"/>
    <property type="match status" value="1"/>
</dbReference>
<dbReference type="InterPro" id="IPR001412">
    <property type="entry name" value="aa-tRNA-synth_I_CS"/>
</dbReference>
<dbReference type="InterPro" id="IPR041872">
    <property type="entry name" value="Anticodon_Met"/>
</dbReference>
<dbReference type="InterPro" id="IPR023458">
    <property type="entry name" value="Met-tRNA_ligase_1"/>
</dbReference>
<dbReference type="InterPro" id="IPR014758">
    <property type="entry name" value="Met-tRNA_synth"/>
</dbReference>
<dbReference type="InterPro" id="IPR015413">
    <property type="entry name" value="Methionyl/Leucyl_tRNA_Synth"/>
</dbReference>
<dbReference type="InterPro" id="IPR033911">
    <property type="entry name" value="MetRS_core"/>
</dbReference>
<dbReference type="InterPro" id="IPR029038">
    <property type="entry name" value="MetRS_Zn"/>
</dbReference>
<dbReference type="InterPro" id="IPR014729">
    <property type="entry name" value="Rossmann-like_a/b/a_fold"/>
</dbReference>
<dbReference type="InterPro" id="IPR009080">
    <property type="entry name" value="tRNAsynth_Ia_anticodon-bd"/>
</dbReference>
<dbReference type="NCBIfam" id="TIGR00398">
    <property type="entry name" value="metG"/>
    <property type="match status" value="1"/>
</dbReference>
<dbReference type="NCBIfam" id="NF001100">
    <property type="entry name" value="PRK00133.1"/>
    <property type="match status" value="1"/>
</dbReference>
<dbReference type="PANTHER" id="PTHR45765">
    <property type="entry name" value="METHIONINE--TRNA LIGASE"/>
    <property type="match status" value="1"/>
</dbReference>
<dbReference type="PANTHER" id="PTHR45765:SF1">
    <property type="entry name" value="METHIONINE--TRNA LIGASE, CYTOPLASMIC"/>
    <property type="match status" value="1"/>
</dbReference>
<dbReference type="Pfam" id="PF09334">
    <property type="entry name" value="tRNA-synt_1g"/>
    <property type="match status" value="1"/>
</dbReference>
<dbReference type="PRINTS" id="PR01041">
    <property type="entry name" value="TRNASYNTHMET"/>
</dbReference>
<dbReference type="SUPFAM" id="SSF47323">
    <property type="entry name" value="Anticodon-binding domain of a subclass of class I aminoacyl-tRNA synthetases"/>
    <property type="match status" value="1"/>
</dbReference>
<dbReference type="SUPFAM" id="SSF57770">
    <property type="entry name" value="Methionyl-tRNA synthetase (MetRS), Zn-domain"/>
    <property type="match status" value="1"/>
</dbReference>
<dbReference type="SUPFAM" id="SSF52374">
    <property type="entry name" value="Nucleotidylyl transferase"/>
    <property type="match status" value="1"/>
</dbReference>
<dbReference type="PROSITE" id="PS00178">
    <property type="entry name" value="AA_TRNA_LIGASE_I"/>
    <property type="match status" value="1"/>
</dbReference>
<name>SYM_WIGBR</name>
<reference key="1">
    <citation type="journal article" date="2002" name="Nat. Genet.">
        <title>Genome sequence of the endocellular obligate symbiont of tsetse flies, Wigglesworthia glossinidia.</title>
        <authorList>
            <person name="Akman L."/>
            <person name="Yamashita A."/>
            <person name="Watanabe H."/>
            <person name="Oshima K."/>
            <person name="Shiba T."/>
            <person name="Hattori M."/>
            <person name="Aksoy S."/>
        </authorList>
    </citation>
    <scope>NUCLEOTIDE SEQUENCE [LARGE SCALE GENOMIC DNA]</scope>
</reference>